<comment type="function">
    <text evidence="2 5 6">Constitutively active G-protein coupled receptor that maintains high 3'-5'-cyclic adenosine monophosphate (cAMP) levels that a plays a role in serveral processes including meiotic arrest in oocytes or neuronal development via activation of numerous intracellular signaling pathways. Acts as an essential activator of thermogenic adipocytes and drives thermogenesis via its intrinsic G(s)-coupling activity without the requirement of a ligand (PubMed:34048700). Has a potential role in modulating a number of brain functions, including behavioral responses to stress (By similarity), amyloid-beta peptide generation in neurons (By similarity). Stimulates neurite outgrowth in cerebellar granular neurons modulated via PKA, ERK, and most strongly PI3K-mediated signaling pathways (By similarity).</text>
</comment>
<comment type="interaction">
    <interactant intactId="EBI-3909653">
        <id>P46089</id>
    </interactant>
    <interactant intactId="EBI-302641">
        <id>P05067-4</id>
        <label>APP</label>
    </interactant>
    <organismsDiffer>false</organismsDiffer>
    <experiments>2</experiments>
</comment>
<comment type="subcellular location">
    <subcellularLocation>
        <location>Cell membrane</location>
        <topology>Multi-pass membrane protein</topology>
    </subcellularLocation>
</comment>
<comment type="tissue specificity">
    <text>Expressed predominantly in the central nervous system, and at low levels in the lung, kidney, testis, ovary and eye. Highly expressed in regions of the brain implicated in the Alzheimer disease.</text>
</comment>
<comment type="induction">
    <text evidence="6">Upon cold exposure by a lipolytic signal in thermogenic adipose tissue.</text>
</comment>
<comment type="similarity">
    <text evidence="4">Belongs to the G-protein coupled receptor 1 family.</text>
</comment>
<comment type="caution">
    <text evidence="7">Was originally (PubMed:12220620) thought to be a receptor for sphingosine 1-phosphate. PubMed:19286662 demonstrated that it is not the case.</text>
</comment>
<sequence length="330" mass="35010">MMWGAGSPLAWLSAGSGNVNVSSVGPAEGPTGPAAPLPSPKAWDVVLCISGTLVSCENALVVAIIVGTPAFRAPMFLLVGSLAVADLLAGLGLVLHFAAVFCIGSAEMSLVLVGVLAMAFTASIGSLLAITVDRYLSLYNALTYYSETTVTRTYVMLALVWGGALGLGLLPVLAWNCLDGLTTCGVVYPLSKNHLVVLAIAFFMVFGIMLQLYAQICRIVCRHAQQIALQRHLLPASHYVATRKGIATLAVVLGAFAACWLPFTVYCLLGDAHSPPLYTYLTLLPATYNSMINPIIYAFRNQDVQKVLWAVCCCCSSSKIPFRSRSPSDV</sequence>
<gene>
    <name type="primary">GPR3</name>
    <name type="synonym">ACCA</name>
</gene>
<proteinExistence type="evidence at protein level"/>
<evidence type="ECO:0000250" key="1"/>
<evidence type="ECO:0000250" key="2">
    <source>
        <dbReference type="UniProtKB" id="P35413"/>
    </source>
</evidence>
<evidence type="ECO:0000255" key="3"/>
<evidence type="ECO:0000255" key="4">
    <source>
        <dbReference type="PROSITE-ProRule" id="PRU00521"/>
    </source>
</evidence>
<evidence type="ECO:0000269" key="5">
    <source>
    </source>
</evidence>
<evidence type="ECO:0000269" key="6">
    <source>
    </source>
</evidence>
<evidence type="ECO:0000305" key="7">
    <source>
    </source>
</evidence>
<evidence type="ECO:0007829" key="8">
    <source>
        <dbReference type="PDB" id="8U8F"/>
    </source>
</evidence>
<evidence type="ECO:0007829" key="9">
    <source>
        <dbReference type="PDB" id="8WW2"/>
    </source>
</evidence>
<protein>
    <recommendedName>
        <fullName>G-protein coupled receptor 3</fullName>
    </recommendedName>
    <alternativeName>
        <fullName>ACCA orphan receptor</fullName>
    </alternativeName>
</protein>
<keyword id="KW-0002">3D-structure</keyword>
<keyword id="KW-1003">Cell membrane</keyword>
<keyword id="KW-0297">G-protein coupled receptor</keyword>
<keyword id="KW-0325">Glycoprotein</keyword>
<keyword id="KW-0449">Lipoprotein</keyword>
<keyword id="KW-0472">Membrane</keyword>
<keyword id="KW-0564">Palmitate</keyword>
<keyword id="KW-0597">Phosphoprotein</keyword>
<keyword id="KW-1267">Proteomics identification</keyword>
<keyword id="KW-0675">Receptor</keyword>
<keyword id="KW-1185">Reference proteome</keyword>
<keyword id="KW-0807">Transducer</keyword>
<keyword id="KW-0812">Transmembrane</keyword>
<keyword id="KW-1133">Transmembrane helix</keyword>
<dbReference type="EMBL" id="U18550">
    <property type="protein sequence ID" value="AAB60402.1"/>
    <property type="molecule type" value="Genomic_DNA"/>
</dbReference>
<dbReference type="EMBL" id="L32831">
    <property type="protein sequence ID" value="AAA73560.1"/>
    <property type="molecule type" value="Genomic_DNA"/>
</dbReference>
<dbReference type="EMBL" id="X83956">
    <property type="protein sequence ID" value="CAA58787.1"/>
    <property type="molecule type" value="Genomic_DNA"/>
</dbReference>
<dbReference type="EMBL" id="AK291185">
    <property type="protein sequence ID" value="BAF83874.1"/>
    <property type="molecule type" value="mRNA"/>
</dbReference>
<dbReference type="EMBL" id="AK314868">
    <property type="protein sequence ID" value="BAG37383.1"/>
    <property type="molecule type" value="mRNA"/>
</dbReference>
<dbReference type="EMBL" id="AL096774">
    <property type="protein sequence ID" value="CAC18517.1"/>
    <property type="molecule type" value="Genomic_DNA"/>
</dbReference>
<dbReference type="EMBL" id="CH471059">
    <property type="protein sequence ID" value="EAX07754.1"/>
    <property type="molecule type" value="Genomic_DNA"/>
</dbReference>
<dbReference type="EMBL" id="BC032702">
    <property type="protein sequence ID" value="AAH32702.1"/>
    <property type="molecule type" value="mRNA"/>
</dbReference>
<dbReference type="EMBL" id="U13668">
    <property type="protein sequence ID" value="AAA64594.1"/>
    <property type="molecule type" value="Genomic_DNA"/>
</dbReference>
<dbReference type="CCDS" id="CCDS303.1"/>
<dbReference type="PIR" id="A55689">
    <property type="entry name" value="A55689"/>
</dbReference>
<dbReference type="RefSeq" id="NP_005272.1">
    <property type="nucleotide sequence ID" value="NM_005281.4"/>
</dbReference>
<dbReference type="PDB" id="8U8F">
    <property type="method" value="EM"/>
    <property type="resolution" value="3.49 A"/>
    <property type="chains" value="R=2-330"/>
</dbReference>
<dbReference type="PDB" id="8WW2">
    <property type="method" value="EM"/>
    <property type="resolution" value="2.79 A"/>
    <property type="chains" value="R=1-330"/>
</dbReference>
<dbReference type="PDB" id="8X2K">
    <property type="method" value="EM"/>
    <property type="resolution" value="3.03 A"/>
    <property type="chains" value="A=1-330"/>
</dbReference>
<dbReference type="PDBsum" id="8U8F"/>
<dbReference type="PDBsum" id="8WW2"/>
<dbReference type="PDBsum" id="8X2K"/>
<dbReference type="EMDB" id="EMD-37881"/>
<dbReference type="EMDB" id="EMD-38015"/>
<dbReference type="EMDB" id="EMD-42023"/>
<dbReference type="SMR" id="P46089"/>
<dbReference type="BioGRID" id="109088">
    <property type="interactions" value="11"/>
</dbReference>
<dbReference type="FunCoup" id="P46089">
    <property type="interactions" value="103"/>
</dbReference>
<dbReference type="IntAct" id="P46089">
    <property type="interactions" value="14"/>
</dbReference>
<dbReference type="STRING" id="9606.ENSP00000363136"/>
<dbReference type="ChEMBL" id="CHEMBL4523856"/>
<dbReference type="GuidetoPHARMACOLOGY" id="83"/>
<dbReference type="TCDB" id="9.A.14.2.7">
    <property type="family name" value="the g-protein-coupled receptor (gpcr) family"/>
</dbReference>
<dbReference type="GlyCosmos" id="P46089">
    <property type="glycosylation" value="1 site, No reported glycans"/>
</dbReference>
<dbReference type="GlyGen" id="P46089">
    <property type="glycosylation" value="2 sites"/>
</dbReference>
<dbReference type="iPTMnet" id="P46089"/>
<dbReference type="PhosphoSitePlus" id="P46089"/>
<dbReference type="BioMuta" id="GPR3"/>
<dbReference type="DMDM" id="1170006"/>
<dbReference type="MassIVE" id="P46089"/>
<dbReference type="PaxDb" id="9606-ENSP00000363136"/>
<dbReference type="PeptideAtlas" id="P46089"/>
<dbReference type="ProteomicsDB" id="55716"/>
<dbReference type="Antibodypedia" id="3339">
    <property type="antibodies" value="354 antibodies from 38 providers"/>
</dbReference>
<dbReference type="DNASU" id="2827"/>
<dbReference type="Ensembl" id="ENST00000374024.4">
    <property type="protein sequence ID" value="ENSP00000363136.3"/>
    <property type="gene ID" value="ENSG00000181773.7"/>
</dbReference>
<dbReference type="GeneID" id="2827"/>
<dbReference type="KEGG" id="hsa:2827"/>
<dbReference type="MANE-Select" id="ENST00000374024.4">
    <property type="protein sequence ID" value="ENSP00000363136.3"/>
    <property type="RefSeq nucleotide sequence ID" value="NM_005281.4"/>
    <property type="RefSeq protein sequence ID" value="NP_005272.1"/>
</dbReference>
<dbReference type="UCSC" id="uc001bod.5">
    <property type="organism name" value="human"/>
</dbReference>
<dbReference type="AGR" id="HGNC:4484"/>
<dbReference type="CTD" id="2827"/>
<dbReference type="DisGeNET" id="2827"/>
<dbReference type="GeneCards" id="GPR3"/>
<dbReference type="HGNC" id="HGNC:4484">
    <property type="gene designation" value="GPR3"/>
</dbReference>
<dbReference type="HPA" id="ENSG00000181773">
    <property type="expression patterns" value="Tissue enhanced (heart)"/>
</dbReference>
<dbReference type="MIM" id="600241">
    <property type="type" value="gene"/>
</dbReference>
<dbReference type="neXtProt" id="NX_P46089"/>
<dbReference type="OpenTargets" id="ENSG00000181773"/>
<dbReference type="PharmGKB" id="PA28872"/>
<dbReference type="VEuPathDB" id="HostDB:ENSG00000181773"/>
<dbReference type="eggNOG" id="KOG3656">
    <property type="taxonomic scope" value="Eukaryota"/>
</dbReference>
<dbReference type="GeneTree" id="ENSGT01110000267224"/>
<dbReference type="HOGENOM" id="CLU_065071_0_0_1"/>
<dbReference type="InParanoid" id="P46089"/>
<dbReference type="OMA" id="FRTPMFL"/>
<dbReference type="OrthoDB" id="10042731at2759"/>
<dbReference type="PAN-GO" id="P46089">
    <property type="GO annotations" value="5 GO annotations based on evolutionary models"/>
</dbReference>
<dbReference type="PhylomeDB" id="P46089"/>
<dbReference type="TreeFam" id="TF330052"/>
<dbReference type="PathwayCommons" id="P46089"/>
<dbReference type="SignaLink" id="P46089"/>
<dbReference type="BioGRID-ORCS" id="2827">
    <property type="hits" value="8 hits in 1153 CRISPR screens"/>
</dbReference>
<dbReference type="GeneWiki" id="GPR3"/>
<dbReference type="GenomeRNAi" id="2827"/>
<dbReference type="Pharos" id="P46089">
    <property type="development level" value="Tchem"/>
</dbReference>
<dbReference type="PRO" id="PR:P46089"/>
<dbReference type="Proteomes" id="UP000005640">
    <property type="component" value="Chromosome 1"/>
</dbReference>
<dbReference type="RNAct" id="P46089">
    <property type="molecule type" value="protein"/>
</dbReference>
<dbReference type="Bgee" id="ENSG00000181773">
    <property type="expression patterns" value="Expressed in secondary oocyte and 98 other cell types or tissues"/>
</dbReference>
<dbReference type="ExpressionAtlas" id="P46089">
    <property type="expression patterns" value="baseline and differential"/>
</dbReference>
<dbReference type="GO" id="GO:0005737">
    <property type="term" value="C:cytoplasm"/>
    <property type="evidence" value="ECO:0000318"/>
    <property type="project" value="GO_Central"/>
</dbReference>
<dbReference type="GO" id="GO:0005886">
    <property type="term" value="C:plasma membrane"/>
    <property type="evidence" value="ECO:0000318"/>
    <property type="project" value="GO_Central"/>
</dbReference>
<dbReference type="GO" id="GO:0004930">
    <property type="term" value="F:G protein-coupled receptor activity"/>
    <property type="evidence" value="ECO:0000304"/>
    <property type="project" value="ProtInc"/>
</dbReference>
<dbReference type="GO" id="GO:0038036">
    <property type="term" value="F:sphingosine-1-phosphate receptor activity"/>
    <property type="evidence" value="ECO:0000318"/>
    <property type="project" value="GO_Central"/>
</dbReference>
<dbReference type="GO" id="GO:0007189">
    <property type="term" value="P:adenylate cyclase-activating G protein-coupled receptor signaling pathway"/>
    <property type="evidence" value="ECO:0000318"/>
    <property type="project" value="GO_Central"/>
</dbReference>
<dbReference type="GO" id="GO:0120162">
    <property type="term" value="P:positive regulation of cold-induced thermogenesis"/>
    <property type="evidence" value="ECO:0000250"/>
    <property type="project" value="YuBioLab"/>
</dbReference>
<dbReference type="GO" id="GO:0040020">
    <property type="term" value="P:regulation of meiotic nuclear division"/>
    <property type="evidence" value="ECO:0007669"/>
    <property type="project" value="Ensembl"/>
</dbReference>
<dbReference type="GO" id="GO:0019222">
    <property type="term" value="P:regulation of metabolic process"/>
    <property type="evidence" value="ECO:0000318"/>
    <property type="project" value="GO_Central"/>
</dbReference>
<dbReference type="FunFam" id="1.20.1070.10:FF:000067">
    <property type="entry name" value="G-protein coupled receptor 12"/>
    <property type="match status" value="1"/>
</dbReference>
<dbReference type="Gene3D" id="1.20.1070.10">
    <property type="entry name" value="Rhodopsin 7-helix transmembrane proteins"/>
    <property type="match status" value="1"/>
</dbReference>
<dbReference type="InterPro" id="IPR000276">
    <property type="entry name" value="GPCR_Rhodpsn"/>
</dbReference>
<dbReference type="InterPro" id="IPR017452">
    <property type="entry name" value="GPCR_Rhodpsn_7TM"/>
</dbReference>
<dbReference type="InterPro" id="IPR000984">
    <property type="entry name" value="GPR3"/>
</dbReference>
<dbReference type="InterPro" id="IPR000723">
    <property type="entry name" value="GPR_3/6/12_orphan"/>
</dbReference>
<dbReference type="PANTHER" id="PTHR22750">
    <property type="entry name" value="G-PROTEIN COUPLED RECEPTOR"/>
    <property type="match status" value="1"/>
</dbReference>
<dbReference type="Pfam" id="PF00001">
    <property type="entry name" value="7tm_1"/>
    <property type="match status" value="1"/>
</dbReference>
<dbReference type="PRINTS" id="PR00237">
    <property type="entry name" value="GPCRRHODOPSN"/>
</dbReference>
<dbReference type="PRINTS" id="PR00648">
    <property type="entry name" value="GPR3ORPHANR"/>
</dbReference>
<dbReference type="PRINTS" id="PR00644">
    <property type="entry name" value="GPRORPHANR"/>
</dbReference>
<dbReference type="SUPFAM" id="SSF81321">
    <property type="entry name" value="Family A G protein-coupled receptor-like"/>
    <property type="match status" value="1"/>
</dbReference>
<dbReference type="PROSITE" id="PS00237">
    <property type="entry name" value="G_PROTEIN_RECEP_F1_1"/>
    <property type="match status" value="1"/>
</dbReference>
<dbReference type="PROSITE" id="PS50262">
    <property type="entry name" value="G_PROTEIN_RECEP_F1_2"/>
    <property type="match status" value="1"/>
</dbReference>
<reference key="1">
    <citation type="journal article" date="1995" name="Genomics">
        <title>Molecular cloning and chromosomal localization of human genes encoding three closely related G protein-coupled receptors.</title>
        <authorList>
            <person name="Song Z.-H."/>
            <person name="Modi W."/>
            <person name="Bonner T.I."/>
        </authorList>
    </citation>
    <scope>NUCLEOTIDE SEQUENCE [GENOMIC DNA]</scope>
</reference>
<reference key="2">
    <citation type="journal article" date="1994" name="Genomics">
        <title>Isolation and chromosomal localization of a novel human G-protein-coupled receptor (GPR3) expressed predominantly in the central nervous system.</title>
        <authorList>
            <person name="Iismaa T.P."/>
            <person name="Kiefer J."/>
            <person name="Liu M.L."/>
            <person name="Baker E."/>
            <person name="Sutherland G.R."/>
            <person name="Shine J."/>
        </authorList>
    </citation>
    <scope>NUCLEOTIDE SEQUENCE [GENOMIC DNA]</scope>
</reference>
<reference key="3">
    <citation type="journal article" date="1995" name="Biochem. J.">
        <title>Molecular cloning of an orphan G-protein-coupled receptor that constitutively activates adenylate cyclase.</title>
        <authorList>
            <person name="Eggerickx D."/>
            <person name="Denef J.F."/>
            <person name="Labbe O."/>
            <person name="Hayashi Y."/>
            <person name="Refetoff S."/>
            <person name="Vassart G."/>
            <person name="Parmentier M."/>
            <person name="Libert F."/>
        </authorList>
    </citation>
    <scope>NUCLEOTIDE SEQUENCE [GENOMIC DNA]</scope>
</reference>
<reference key="4">
    <citation type="journal article" date="2004" name="Nat. Genet.">
        <title>Complete sequencing and characterization of 21,243 full-length human cDNAs.</title>
        <authorList>
            <person name="Ota T."/>
            <person name="Suzuki Y."/>
            <person name="Nishikawa T."/>
            <person name="Otsuki T."/>
            <person name="Sugiyama T."/>
            <person name="Irie R."/>
            <person name="Wakamatsu A."/>
            <person name="Hayashi K."/>
            <person name="Sato H."/>
            <person name="Nagai K."/>
            <person name="Kimura K."/>
            <person name="Makita H."/>
            <person name="Sekine M."/>
            <person name="Obayashi M."/>
            <person name="Nishi T."/>
            <person name="Shibahara T."/>
            <person name="Tanaka T."/>
            <person name="Ishii S."/>
            <person name="Yamamoto J."/>
            <person name="Saito K."/>
            <person name="Kawai Y."/>
            <person name="Isono Y."/>
            <person name="Nakamura Y."/>
            <person name="Nagahari K."/>
            <person name="Murakami K."/>
            <person name="Yasuda T."/>
            <person name="Iwayanagi T."/>
            <person name="Wagatsuma M."/>
            <person name="Shiratori A."/>
            <person name="Sudo H."/>
            <person name="Hosoiri T."/>
            <person name="Kaku Y."/>
            <person name="Kodaira H."/>
            <person name="Kondo H."/>
            <person name="Sugawara M."/>
            <person name="Takahashi M."/>
            <person name="Kanda K."/>
            <person name="Yokoi T."/>
            <person name="Furuya T."/>
            <person name="Kikkawa E."/>
            <person name="Omura Y."/>
            <person name="Abe K."/>
            <person name="Kamihara K."/>
            <person name="Katsuta N."/>
            <person name="Sato K."/>
            <person name="Tanikawa M."/>
            <person name="Yamazaki M."/>
            <person name="Ninomiya K."/>
            <person name="Ishibashi T."/>
            <person name="Yamashita H."/>
            <person name="Murakawa K."/>
            <person name="Fujimori K."/>
            <person name="Tanai H."/>
            <person name="Kimata M."/>
            <person name="Watanabe M."/>
            <person name="Hiraoka S."/>
            <person name="Chiba Y."/>
            <person name="Ishida S."/>
            <person name="Ono Y."/>
            <person name="Takiguchi S."/>
            <person name="Watanabe S."/>
            <person name="Yosida M."/>
            <person name="Hotuta T."/>
            <person name="Kusano J."/>
            <person name="Kanehori K."/>
            <person name="Takahashi-Fujii A."/>
            <person name="Hara H."/>
            <person name="Tanase T.-O."/>
            <person name="Nomura Y."/>
            <person name="Togiya S."/>
            <person name="Komai F."/>
            <person name="Hara R."/>
            <person name="Takeuchi K."/>
            <person name="Arita M."/>
            <person name="Imose N."/>
            <person name="Musashino K."/>
            <person name="Yuuki H."/>
            <person name="Oshima A."/>
            <person name="Sasaki N."/>
            <person name="Aotsuka S."/>
            <person name="Yoshikawa Y."/>
            <person name="Matsunawa H."/>
            <person name="Ichihara T."/>
            <person name="Shiohata N."/>
            <person name="Sano S."/>
            <person name="Moriya S."/>
            <person name="Momiyama H."/>
            <person name="Satoh N."/>
            <person name="Takami S."/>
            <person name="Terashima Y."/>
            <person name="Suzuki O."/>
            <person name="Nakagawa S."/>
            <person name="Senoh A."/>
            <person name="Mizoguchi H."/>
            <person name="Goto Y."/>
            <person name="Shimizu F."/>
            <person name="Wakebe H."/>
            <person name="Hishigaki H."/>
            <person name="Watanabe T."/>
            <person name="Sugiyama A."/>
            <person name="Takemoto M."/>
            <person name="Kawakami B."/>
            <person name="Yamazaki M."/>
            <person name="Watanabe K."/>
            <person name="Kumagai A."/>
            <person name="Itakura S."/>
            <person name="Fukuzumi Y."/>
            <person name="Fujimori Y."/>
            <person name="Komiyama M."/>
            <person name="Tashiro H."/>
            <person name="Tanigami A."/>
            <person name="Fujiwara T."/>
            <person name="Ono T."/>
            <person name="Yamada K."/>
            <person name="Fujii Y."/>
            <person name="Ozaki K."/>
            <person name="Hirao M."/>
            <person name="Ohmori Y."/>
            <person name="Kawabata A."/>
            <person name="Hikiji T."/>
            <person name="Kobatake N."/>
            <person name="Inagaki H."/>
            <person name="Ikema Y."/>
            <person name="Okamoto S."/>
            <person name="Okitani R."/>
            <person name="Kawakami T."/>
            <person name="Noguchi S."/>
            <person name="Itoh T."/>
            <person name="Shigeta K."/>
            <person name="Senba T."/>
            <person name="Matsumura K."/>
            <person name="Nakajima Y."/>
            <person name="Mizuno T."/>
            <person name="Morinaga M."/>
            <person name="Sasaki M."/>
            <person name="Togashi T."/>
            <person name="Oyama M."/>
            <person name="Hata H."/>
            <person name="Watanabe M."/>
            <person name="Komatsu T."/>
            <person name="Mizushima-Sugano J."/>
            <person name="Satoh T."/>
            <person name="Shirai Y."/>
            <person name="Takahashi Y."/>
            <person name="Nakagawa K."/>
            <person name="Okumura K."/>
            <person name="Nagase T."/>
            <person name="Nomura N."/>
            <person name="Kikuchi H."/>
            <person name="Masuho Y."/>
            <person name="Yamashita R."/>
            <person name="Nakai K."/>
            <person name="Yada T."/>
            <person name="Nakamura Y."/>
            <person name="Ohara O."/>
            <person name="Isogai T."/>
            <person name="Sugano S."/>
        </authorList>
    </citation>
    <scope>NUCLEOTIDE SEQUENCE [LARGE SCALE MRNA]</scope>
</reference>
<reference key="5">
    <citation type="journal article" date="2006" name="Nature">
        <title>The DNA sequence and biological annotation of human chromosome 1.</title>
        <authorList>
            <person name="Gregory S.G."/>
            <person name="Barlow K.F."/>
            <person name="McLay K.E."/>
            <person name="Kaul R."/>
            <person name="Swarbreck D."/>
            <person name="Dunham A."/>
            <person name="Scott C.E."/>
            <person name="Howe K.L."/>
            <person name="Woodfine K."/>
            <person name="Spencer C.C.A."/>
            <person name="Jones M.C."/>
            <person name="Gillson C."/>
            <person name="Searle S."/>
            <person name="Zhou Y."/>
            <person name="Kokocinski F."/>
            <person name="McDonald L."/>
            <person name="Evans R."/>
            <person name="Phillips K."/>
            <person name="Atkinson A."/>
            <person name="Cooper R."/>
            <person name="Jones C."/>
            <person name="Hall R.E."/>
            <person name="Andrews T.D."/>
            <person name="Lloyd C."/>
            <person name="Ainscough R."/>
            <person name="Almeida J.P."/>
            <person name="Ambrose K.D."/>
            <person name="Anderson F."/>
            <person name="Andrew R.W."/>
            <person name="Ashwell R.I.S."/>
            <person name="Aubin K."/>
            <person name="Babbage A.K."/>
            <person name="Bagguley C.L."/>
            <person name="Bailey J."/>
            <person name="Beasley H."/>
            <person name="Bethel G."/>
            <person name="Bird C.P."/>
            <person name="Bray-Allen S."/>
            <person name="Brown J.Y."/>
            <person name="Brown A.J."/>
            <person name="Buckley D."/>
            <person name="Burton J."/>
            <person name="Bye J."/>
            <person name="Carder C."/>
            <person name="Chapman J.C."/>
            <person name="Clark S.Y."/>
            <person name="Clarke G."/>
            <person name="Clee C."/>
            <person name="Cobley V."/>
            <person name="Collier R.E."/>
            <person name="Corby N."/>
            <person name="Coville G.J."/>
            <person name="Davies J."/>
            <person name="Deadman R."/>
            <person name="Dunn M."/>
            <person name="Earthrowl M."/>
            <person name="Ellington A.G."/>
            <person name="Errington H."/>
            <person name="Frankish A."/>
            <person name="Frankland J."/>
            <person name="French L."/>
            <person name="Garner P."/>
            <person name="Garnett J."/>
            <person name="Gay L."/>
            <person name="Ghori M.R.J."/>
            <person name="Gibson R."/>
            <person name="Gilby L.M."/>
            <person name="Gillett W."/>
            <person name="Glithero R.J."/>
            <person name="Grafham D.V."/>
            <person name="Griffiths C."/>
            <person name="Griffiths-Jones S."/>
            <person name="Grocock R."/>
            <person name="Hammond S."/>
            <person name="Harrison E.S.I."/>
            <person name="Hart E."/>
            <person name="Haugen E."/>
            <person name="Heath P.D."/>
            <person name="Holmes S."/>
            <person name="Holt K."/>
            <person name="Howden P.J."/>
            <person name="Hunt A.R."/>
            <person name="Hunt S.E."/>
            <person name="Hunter G."/>
            <person name="Isherwood J."/>
            <person name="James R."/>
            <person name="Johnson C."/>
            <person name="Johnson D."/>
            <person name="Joy A."/>
            <person name="Kay M."/>
            <person name="Kershaw J.K."/>
            <person name="Kibukawa M."/>
            <person name="Kimberley A.M."/>
            <person name="King A."/>
            <person name="Knights A.J."/>
            <person name="Lad H."/>
            <person name="Laird G."/>
            <person name="Lawlor S."/>
            <person name="Leongamornlert D.A."/>
            <person name="Lloyd D.M."/>
            <person name="Loveland J."/>
            <person name="Lovell J."/>
            <person name="Lush M.J."/>
            <person name="Lyne R."/>
            <person name="Martin S."/>
            <person name="Mashreghi-Mohammadi M."/>
            <person name="Matthews L."/>
            <person name="Matthews N.S.W."/>
            <person name="McLaren S."/>
            <person name="Milne S."/>
            <person name="Mistry S."/>
            <person name="Moore M.J.F."/>
            <person name="Nickerson T."/>
            <person name="O'Dell C.N."/>
            <person name="Oliver K."/>
            <person name="Palmeiri A."/>
            <person name="Palmer S.A."/>
            <person name="Parker A."/>
            <person name="Patel D."/>
            <person name="Pearce A.V."/>
            <person name="Peck A.I."/>
            <person name="Pelan S."/>
            <person name="Phelps K."/>
            <person name="Phillimore B.J."/>
            <person name="Plumb R."/>
            <person name="Rajan J."/>
            <person name="Raymond C."/>
            <person name="Rouse G."/>
            <person name="Saenphimmachak C."/>
            <person name="Sehra H.K."/>
            <person name="Sheridan E."/>
            <person name="Shownkeen R."/>
            <person name="Sims S."/>
            <person name="Skuce C.D."/>
            <person name="Smith M."/>
            <person name="Steward C."/>
            <person name="Subramanian S."/>
            <person name="Sycamore N."/>
            <person name="Tracey A."/>
            <person name="Tromans A."/>
            <person name="Van Helmond Z."/>
            <person name="Wall M."/>
            <person name="Wallis J.M."/>
            <person name="White S."/>
            <person name="Whitehead S.L."/>
            <person name="Wilkinson J.E."/>
            <person name="Willey D.L."/>
            <person name="Williams H."/>
            <person name="Wilming L."/>
            <person name="Wray P.W."/>
            <person name="Wu Z."/>
            <person name="Coulson A."/>
            <person name="Vaudin M."/>
            <person name="Sulston J.E."/>
            <person name="Durbin R.M."/>
            <person name="Hubbard T."/>
            <person name="Wooster R."/>
            <person name="Dunham I."/>
            <person name="Carter N.P."/>
            <person name="McVean G."/>
            <person name="Ross M.T."/>
            <person name="Harrow J."/>
            <person name="Olson M.V."/>
            <person name="Beck S."/>
            <person name="Rogers J."/>
            <person name="Bentley D.R."/>
        </authorList>
    </citation>
    <scope>NUCLEOTIDE SEQUENCE [LARGE SCALE GENOMIC DNA]</scope>
</reference>
<reference key="6">
    <citation type="submission" date="2005-09" db="EMBL/GenBank/DDBJ databases">
        <authorList>
            <person name="Mural R.J."/>
            <person name="Istrail S."/>
            <person name="Sutton G.G."/>
            <person name="Florea L."/>
            <person name="Halpern A.L."/>
            <person name="Mobarry C.M."/>
            <person name="Lippert R."/>
            <person name="Walenz B."/>
            <person name="Shatkay H."/>
            <person name="Dew I."/>
            <person name="Miller J.R."/>
            <person name="Flanigan M.J."/>
            <person name="Edwards N.J."/>
            <person name="Bolanos R."/>
            <person name="Fasulo D."/>
            <person name="Halldorsson B.V."/>
            <person name="Hannenhalli S."/>
            <person name="Turner R."/>
            <person name="Yooseph S."/>
            <person name="Lu F."/>
            <person name="Nusskern D.R."/>
            <person name="Shue B.C."/>
            <person name="Zheng X.H."/>
            <person name="Zhong F."/>
            <person name="Delcher A.L."/>
            <person name="Huson D.H."/>
            <person name="Kravitz S.A."/>
            <person name="Mouchard L."/>
            <person name="Reinert K."/>
            <person name="Remington K.A."/>
            <person name="Clark A.G."/>
            <person name="Waterman M.S."/>
            <person name="Eichler E.E."/>
            <person name="Adams M.D."/>
            <person name="Hunkapiller M.W."/>
            <person name="Myers E.W."/>
            <person name="Venter J.C."/>
        </authorList>
    </citation>
    <scope>NUCLEOTIDE SEQUENCE [LARGE SCALE GENOMIC DNA]</scope>
</reference>
<reference key="7">
    <citation type="journal article" date="2004" name="Genome Res.">
        <title>The status, quality, and expansion of the NIH full-length cDNA project: the Mammalian Gene Collection (MGC).</title>
        <authorList>
            <consortium name="The MGC Project Team"/>
        </authorList>
    </citation>
    <scope>NUCLEOTIDE SEQUENCE [LARGE SCALE MRNA]</scope>
    <source>
        <tissue>Brain</tissue>
    </source>
</reference>
<reference key="8">
    <citation type="journal article" date="1994" name="Genomics">
        <title>Cloning of human genes encoding novel G protein-coupled receptors.</title>
        <authorList>
            <person name="Marchese A."/>
            <person name="Docherty J.M."/>
            <person name="Nguyen T."/>
            <person name="Heiber M."/>
            <person name="Cheng R."/>
            <person name="Heng H.H.Q."/>
            <person name="Tsui L.-C."/>
            <person name="Shi X."/>
            <person name="George S.R."/>
            <person name="O'Dowd B.F."/>
        </authorList>
    </citation>
    <scope>NUCLEOTIDE SEQUENCE [GENOMIC DNA] OF 1-292</scope>
</reference>
<reference key="9">
    <citation type="journal article" date="2002" name="Cell. Signal.">
        <title>Sphingosine 1-phosphate is a ligand of the human gpr3, gpr6 and gpr12 family of constitutively active G protein-coupled receptors.</title>
        <authorList>
            <person name="Uhlenbrock K."/>
            <person name="Gassenhuber J."/>
            <person name="Kostenis E."/>
        </authorList>
    </citation>
    <scope>PRELIMINARY FUNCTION</scope>
</reference>
<reference key="10">
    <citation type="journal article" date="2009" name="J. Biol. Chem.">
        <title>Lipid G protein-coupled receptor ligand identification using beta-arrestin PathHunter assay.</title>
        <authorList>
            <person name="Yin H."/>
            <person name="Chu A."/>
            <person name="Li W."/>
            <person name="Wang B."/>
            <person name="Shelton F."/>
            <person name="Otero F."/>
            <person name="Nguyen D.G."/>
            <person name="Caldwell J.S."/>
            <person name="Chen Y.A."/>
        </authorList>
    </citation>
    <scope>SHOWS THAT IT IS NOT A SPHINGOSINE 1-PHOSPHATE RECEPTOR</scope>
</reference>
<reference key="11">
    <citation type="journal article" date="2009" name="Science">
        <title>The orphan G protein-coupled receptor 3 modulates amyloid-beta peptide generation in neurons.</title>
        <authorList>
            <person name="Thathiah A."/>
            <person name="Spittaels K."/>
            <person name="Hoffmann M."/>
            <person name="Staes M."/>
            <person name="Cohen A."/>
            <person name="Horre K."/>
            <person name="Vanbrabant M."/>
            <person name="Coun F."/>
            <person name="Baekelandt V."/>
            <person name="Delacourte A."/>
            <person name="Fischer D.F."/>
            <person name="Pollet D."/>
            <person name="De Strooper B."/>
            <person name="Merchiers P."/>
        </authorList>
    </citation>
    <scope>FUNCTION</scope>
</reference>
<reference key="12">
    <citation type="journal article" date="2021" name="Cell">
        <title>Lipolysis drives expression of the constitutively active receptor GPR3 to induce adipose thermogenesis.</title>
        <authorList>
            <person name="Sveidahl Johansen O."/>
            <person name="Ma T."/>
            <person name="Hansen J.B."/>
            <person name="Markussen L.K."/>
            <person name="Schreiber R."/>
            <person name="Reverte-Salisa L."/>
            <person name="Dong H."/>
            <person name="Christensen D.P."/>
            <person name="Sun W."/>
            <person name="Gnad T."/>
            <person name="Karavaeva I."/>
            <person name="Nielsen T.S."/>
            <person name="Kooijman S."/>
            <person name="Cero C."/>
            <person name="Dmytriyeva O."/>
            <person name="Shen Y."/>
            <person name="Razzoli M."/>
            <person name="O'Brien S.L."/>
            <person name="Kuipers E.N."/>
            <person name="Nielsen C.H."/>
            <person name="Orchard W."/>
            <person name="Willemsen N."/>
            <person name="Jespersen N.Z."/>
            <person name="Lundh M."/>
            <person name="Sustarsic E.G."/>
            <person name="Hallgren C.M."/>
            <person name="Frost M."/>
            <person name="McGonigle S."/>
            <person name="Isidor M.S."/>
            <person name="Broholm C."/>
            <person name="Pedersen O."/>
            <person name="Hansen J.B."/>
            <person name="Grarup N."/>
            <person name="Hansen T."/>
            <person name="Kjaer A."/>
            <person name="Granneman J.G."/>
            <person name="Babu M.M."/>
            <person name="Calebiro D."/>
            <person name="Nielsen S."/>
            <person name="Ryden M."/>
            <person name="Soccio R."/>
            <person name="Rensen P.C.N."/>
            <person name="Treebak J.T."/>
            <person name="Schwartz T.W."/>
            <person name="Emanuelli B."/>
            <person name="Bartolomucci A."/>
            <person name="Pfeifer A."/>
            <person name="Zechner R."/>
            <person name="Scheele C."/>
            <person name="Mandrup S."/>
            <person name="Gerhart-Hines Z."/>
        </authorList>
    </citation>
    <scope>FUNCTION</scope>
    <scope>INDUCTION BY COLD</scope>
</reference>
<accession>P46089</accession>
<accession>A8K570</accession>
<feature type="chain" id="PRO_0000069510" description="G-protein coupled receptor 3">
    <location>
        <begin position="1"/>
        <end position="330"/>
    </location>
</feature>
<feature type="topological domain" description="Extracellular" evidence="3">
    <location>
        <begin position="1"/>
        <end position="42"/>
    </location>
</feature>
<feature type="transmembrane region" description="Helical; Name=1" evidence="3">
    <location>
        <begin position="43"/>
        <end position="62"/>
    </location>
</feature>
<feature type="topological domain" description="Cytoplasmic" evidence="3">
    <location>
        <begin position="63"/>
        <end position="74"/>
    </location>
</feature>
<feature type="transmembrane region" description="Helical; Name=2" evidence="3">
    <location>
        <begin position="75"/>
        <end position="98"/>
    </location>
</feature>
<feature type="topological domain" description="Extracellular" evidence="3">
    <location>
        <begin position="99"/>
        <end position="110"/>
    </location>
</feature>
<feature type="transmembrane region" description="Helical; Name=3" evidence="3">
    <location>
        <begin position="111"/>
        <end position="132"/>
    </location>
</feature>
<feature type="topological domain" description="Cytoplasmic" evidence="3">
    <location>
        <begin position="133"/>
        <end position="153"/>
    </location>
</feature>
<feature type="transmembrane region" description="Helical; Name=4" evidence="3">
    <location>
        <begin position="154"/>
        <end position="173"/>
    </location>
</feature>
<feature type="topological domain" description="Extracellular" evidence="3">
    <location>
        <begin position="174"/>
        <end position="198"/>
    </location>
</feature>
<feature type="transmembrane region" description="Helical; Name=5" evidence="3">
    <location>
        <begin position="199"/>
        <end position="217"/>
    </location>
</feature>
<feature type="topological domain" description="Cytoplasmic" evidence="3">
    <location>
        <begin position="218"/>
        <end position="245"/>
    </location>
</feature>
<feature type="transmembrane region" description="Helical; Name=6" evidence="3">
    <location>
        <begin position="246"/>
        <end position="272"/>
    </location>
</feature>
<feature type="topological domain" description="Extracellular" evidence="3">
    <location>
        <begin position="273"/>
        <end position="277"/>
    </location>
</feature>
<feature type="transmembrane region" description="Helical; Name=7" evidence="3">
    <location>
        <begin position="278"/>
        <end position="299"/>
    </location>
</feature>
<feature type="topological domain" description="Cytoplasmic" evidence="3">
    <location>
        <begin position="300"/>
        <end position="330"/>
    </location>
</feature>
<feature type="modified residue" description="Phosphoserine" evidence="3">
    <location>
        <position position="324"/>
    </location>
</feature>
<feature type="modified residue" description="Phosphoserine" evidence="3">
    <location>
        <position position="326"/>
    </location>
</feature>
<feature type="modified residue" description="Phosphoserine" evidence="3">
    <location>
        <position position="328"/>
    </location>
</feature>
<feature type="lipid moiety-binding region" description="S-palmitoyl cysteine" evidence="1">
    <location>
        <position position="313"/>
    </location>
</feature>
<feature type="glycosylation site" description="N-linked (GlcNAc...) asparagine" evidence="3">
    <location>
        <position position="20"/>
    </location>
</feature>
<feature type="sequence variant" id="VAR_011859" description="In dbSNP:rs734852.">
    <original>R</original>
    <variation>H</variation>
    <location>
        <position position="222"/>
    </location>
</feature>
<feature type="helix" evidence="9">
    <location>
        <begin position="42"/>
        <end position="66"/>
    </location>
</feature>
<feature type="strand" evidence="8">
    <location>
        <begin position="68"/>
        <end position="70"/>
    </location>
</feature>
<feature type="helix" evidence="9">
    <location>
        <begin position="74"/>
        <end position="91"/>
    </location>
</feature>
<feature type="strand" evidence="9">
    <location>
        <begin position="93"/>
        <end position="103"/>
    </location>
</feature>
<feature type="helix" evidence="9">
    <location>
        <begin position="107"/>
        <end position="139"/>
    </location>
</feature>
<feature type="helix" evidence="9">
    <location>
        <begin position="141"/>
        <end position="143"/>
    </location>
</feature>
<feature type="helix" evidence="9">
    <location>
        <begin position="147"/>
        <end position="166"/>
    </location>
</feature>
<feature type="turn" evidence="9">
    <location>
        <begin position="170"/>
        <end position="174"/>
    </location>
</feature>
<feature type="strand" evidence="9">
    <location>
        <begin position="177"/>
        <end position="182"/>
    </location>
</feature>
<feature type="helix" evidence="9">
    <location>
        <begin position="193"/>
        <end position="229"/>
    </location>
</feature>
<feature type="helix" evidence="9">
    <location>
        <begin position="244"/>
        <end position="269"/>
    </location>
</feature>
<feature type="strand" evidence="9">
    <location>
        <begin position="272"/>
        <end position="274"/>
    </location>
</feature>
<feature type="helix" evidence="9">
    <location>
        <begin position="276"/>
        <end position="282"/>
    </location>
</feature>
<feature type="helix" evidence="9">
    <location>
        <begin position="285"/>
        <end position="297"/>
    </location>
</feature>
<feature type="turn" evidence="9">
    <location>
        <begin position="298"/>
        <end position="300"/>
    </location>
</feature>
<feature type="helix" evidence="9">
    <location>
        <begin position="302"/>
        <end position="312"/>
    </location>
</feature>
<name>GPR3_HUMAN</name>
<organism>
    <name type="scientific">Homo sapiens</name>
    <name type="common">Human</name>
    <dbReference type="NCBI Taxonomy" id="9606"/>
    <lineage>
        <taxon>Eukaryota</taxon>
        <taxon>Metazoa</taxon>
        <taxon>Chordata</taxon>
        <taxon>Craniata</taxon>
        <taxon>Vertebrata</taxon>
        <taxon>Euteleostomi</taxon>
        <taxon>Mammalia</taxon>
        <taxon>Eutheria</taxon>
        <taxon>Euarchontoglires</taxon>
        <taxon>Primates</taxon>
        <taxon>Haplorrhini</taxon>
        <taxon>Catarrhini</taxon>
        <taxon>Hominidae</taxon>
        <taxon>Homo</taxon>
    </lineage>
</organism>